<comment type="subcellular location">
    <subcellularLocation>
        <location>Plastid</location>
        <location>Chloroplast</location>
    </subcellularLocation>
</comment>
<comment type="similarity">
    <text evidence="1">Belongs to the bacterial ribosomal protein bL19 family.</text>
</comment>
<gene>
    <name evidence="1" type="primary">rpl19</name>
</gene>
<dbReference type="EMBL" id="EF067921">
    <property type="protein sequence ID" value="ABK20716.1"/>
    <property type="molecule type" value="Genomic_DNA"/>
</dbReference>
<dbReference type="RefSeq" id="YP_874493.1">
    <property type="nucleotide sequence ID" value="NC_008589.1"/>
</dbReference>
<dbReference type="SMR" id="A0T0N1"/>
<dbReference type="STRING" id="35128.A0T0N1"/>
<dbReference type="PaxDb" id="35128-Thapsdraft1396"/>
<dbReference type="GeneID" id="4524816"/>
<dbReference type="eggNOG" id="KOG1698">
    <property type="taxonomic scope" value="Eukaryota"/>
</dbReference>
<dbReference type="InParanoid" id="A0T0N1"/>
<dbReference type="OMA" id="TITVYYE"/>
<dbReference type="GO" id="GO:0009507">
    <property type="term" value="C:chloroplast"/>
    <property type="evidence" value="ECO:0007669"/>
    <property type="project" value="UniProtKB-SubCell"/>
</dbReference>
<dbReference type="GO" id="GO:0005762">
    <property type="term" value="C:mitochondrial large ribosomal subunit"/>
    <property type="evidence" value="ECO:0000318"/>
    <property type="project" value="GO_Central"/>
</dbReference>
<dbReference type="GO" id="GO:0003735">
    <property type="term" value="F:structural constituent of ribosome"/>
    <property type="evidence" value="ECO:0000318"/>
    <property type="project" value="GO_Central"/>
</dbReference>
<dbReference type="GO" id="GO:0006412">
    <property type="term" value="P:translation"/>
    <property type="evidence" value="ECO:0007669"/>
    <property type="project" value="UniProtKB-UniRule"/>
</dbReference>
<dbReference type="FunFam" id="2.30.30.790:FF:000004">
    <property type="entry name" value="50S ribosomal protein L19, chloroplastic"/>
    <property type="match status" value="1"/>
</dbReference>
<dbReference type="Gene3D" id="2.30.30.790">
    <property type="match status" value="1"/>
</dbReference>
<dbReference type="HAMAP" id="MF_00402">
    <property type="entry name" value="Ribosomal_bL19"/>
    <property type="match status" value="1"/>
</dbReference>
<dbReference type="InterPro" id="IPR001857">
    <property type="entry name" value="Ribosomal_bL19"/>
</dbReference>
<dbReference type="InterPro" id="IPR018257">
    <property type="entry name" value="Ribosomal_bL19_CS"/>
</dbReference>
<dbReference type="InterPro" id="IPR038657">
    <property type="entry name" value="Ribosomal_bL19_sf"/>
</dbReference>
<dbReference type="InterPro" id="IPR008991">
    <property type="entry name" value="Translation_prot_SH3-like_sf"/>
</dbReference>
<dbReference type="NCBIfam" id="TIGR01024">
    <property type="entry name" value="rplS_bact"/>
    <property type="match status" value="1"/>
</dbReference>
<dbReference type="PANTHER" id="PTHR15680:SF9">
    <property type="entry name" value="LARGE RIBOSOMAL SUBUNIT PROTEIN BL19M"/>
    <property type="match status" value="1"/>
</dbReference>
<dbReference type="PANTHER" id="PTHR15680">
    <property type="entry name" value="RIBOSOMAL PROTEIN L19"/>
    <property type="match status" value="1"/>
</dbReference>
<dbReference type="Pfam" id="PF01245">
    <property type="entry name" value="Ribosomal_L19"/>
    <property type="match status" value="1"/>
</dbReference>
<dbReference type="PIRSF" id="PIRSF002191">
    <property type="entry name" value="Ribosomal_L19"/>
    <property type="match status" value="1"/>
</dbReference>
<dbReference type="PRINTS" id="PR00061">
    <property type="entry name" value="RIBOSOMALL19"/>
</dbReference>
<dbReference type="SUPFAM" id="SSF50104">
    <property type="entry name" value="Translation proteins SH3-like domain"/>
    <property type="match status" value="1"/>
</dbReference>
<dbReference type="PROSITE" id="PS01015">
    <property type="entry name" value="RIBOSOMAL_L19"/>
    <property type="match status" value="1"/>
</dbReference>
<keyword id="KW-0150">Chloroplast</keyword>
<keyword id="KW-0934">Plastid</keyword>
<keyword id="KW-0687">Ribonucleoprotein</keyword>
<keyword id="KW-0689">Ribosomal protein</keyword>
<evidence type="ECO:0000255" key="1">
    <source>
        <dbReference type="HAMAP-Rule" id="MF_00402"/>
    </source>
</evidence>
<evidence type="ECO:0000305" key="2"/>
<protein>
    <recommendedName>
        <fullName evidence="1">Large ribosomal subunit protein bL19c</fullName>
    </recommendedName>
    <alternativeName>
        <fullName evidence="2">50S ribosomal protein L19, chloroplastic</fullName>
    </alternativeName>
</protein>
<organism>
    <name type="scientific">Thalassiosira pseudonana</name>
    <name type="common">Marine diatom</name>
    <name type="synonym">Cyclotella nana</name>
    <dbReference type="NCBI Taxonomy" id="35128"/>
    <lineage>
        <taxon>Eukaryota</taxon>
        <taxon>Sar</taxon>
        <taxon>Stramenopiles</taxon>
        <taxon>Ochrophyta</taxon>
        <taxon>Bacillariophyta</taxon>
        <taxon>Coscinodiscophyceae</taxon>
        <taxon>Thalassiosirophycidae</taxon>
        <taxon>Thalassiosirales</taxon>
        <taxon>Thalassiosiraceae</taxon>
        <taxon>Thalassiosira</taxon>
    </lineage>
</organism>
<geneLocation type="chloroplast"/>
<accession>A0T0N1</accession>
<proteinExistence type="inferred from homology"/>
<reference key="1">
    <citation type="journal article" date="2007" name="Mol. Genet. Genomics">
        <title>Chloroplast genomes of the diatoms Phaeodactylum tricornutum and Thalassiosira pseudonana: comparison with other plastid genomes of the red lineage.</title>
        <authorList>
            <person name="Oudot-Le Secq M.-P."/>
            <person name="Grimwood J."/>
            <person name="Shapiro H."/>
            <person name="Armbrust E.V."/>
            <person name="Bowler C."/>
            <person name="Green B.R."/>
        </authorList>
    </citation>
    <scope>NUCLEOTIDE SEQUENCE [LARGE SCALE GENOMIC DNA]</scope>
    <source>
        <strain>CCMP1335 / NEPCC58 / CCAP 1085/12</strain>
    </source>
</reference>
<name>RK19_THAPS</name>
<sequence>MLNLDNQKAIDNLHQSFIKSDLPKIQIGDTLKLGIKIIEGNKERVQFYEGTVIAKKNSSINTTITVRKVLQGIGIERIFLIHSPKVASIEVIRHAKVRRSKLYYLRNLRGKASRLKQRFE</sequence>
<feature type="chain" id="PRO_0000276397" description="Large ribosomal subunit protein bL19c">
    <location>
        <begin position="1"/>
        <end position="120"/>
    </location>
</feature>